<sequence>MAIIDKKRVNQNFSRGAKTYDNYAQVQKHMADKLEIFVHGSKKQYNILEVGCGTGIFSQKILKRFPNSKIDLLDISPAMVETAKEKLGDSPNLNFIVEDVENYNPEKKYDLIFSNATFQWIDDQMRLFNHLYSLLDYGGKIAFSTFGNKTYFELRESLSTLDPELKYSQKFVKLDEMTEITNKNFRILAADEDFFIEKFENVMAFLKAIKGIGSNSALSNKRNFTREKFKALDKIYRDKFGDKNIINVTNHLLYMVLEKVKMRDENLK</sequence>
<keyword id="KW-0093">Biotin biosynthesis</keyword>
<keyword id="KW-0489">Methyltransferase</keyword>
<keyword id="KW-1185">Reference proteome</keyword>
<keyword id="KW-0949">S-adenosyl-L-methionine</keyword>
<keyword id="KW-0808">Transferase</keyword>
<proteinExistence type="inferred from homology"/>
<reference key="1">
    <citation type="journal article" date="2010" name="Stand. Genomic Sci.">
        <title>Complete genome sequence of Ilyobacter polytropus type strain (CuHbu1).</title>
        <authorList>
            <person name="Sikorski J."/>
            <person name="Chertkov O."/>
            <person name="Lapidus A."/>
            <person name="Nolan M."/>
            <person name="Lucas S."/>
            <person name="Del Rio T.G."/>
            <person name="Tice H."/>
            <person name="Cheng J.F."/>
            <person name="Tapia R."/>
            <person name="Han C."/>
            <person name="Goodwin L."/>
            <person name="Pitluck S."/>
            <person name="Liolios K."/>
            <person name="Ivanova N."/>
            <person name="Mavromatis K."/>
            <person name="Mikhailova N."/>
            <person name="Pati A."/>
            <person name="Chen A."/>
            <person name="Palaniappan K."/>
            <person name="Land M."/>
            <person name="Hauser L."/>
            <person name="Chang Y.J."/>
            <person name="Jeffries C.D."/>
            <person name="Brambilla E."/>
            <person name="Yasawong M."/>
            <person name="Rohde M."/>
            <person name="Pukall R."/>
            <person name="Spring S."/>
            <person name="Goker M."/>
            <person name="Woyke T."/>
            <person name="Bristow J."/>
            <person name="Eisen J.A."/>
            <person name="Markowitz V."/>
            <person name="Hugenholtz P."/>
            <person name="Kyrpides N.C."/>
            <person name="Klenk H.P."/>
        </authorList>
    </citation>
    <scope>NUCLEOTIDE SEQUENCE [LARGE SCALE GENOMIC DNA]</scope>
    <source>
        <strain>ATCC 51220 / DSM 2926 / LMG 16218 / CuHBu1</strain>
    </source>
</reference>
<protein>
    <recommendedName>
        <fullName evidence="1">Malonyl-[acyl-carrier protein] O-methyltransferase 1</fullName>
        <shortName evidence="1">Malonyl-ACP O-methyltransferase 1</shortName>
        <ecNumber evidence="1">2.1.1.197</ecNumber>
    </recommendedName>
    <alternativeName>
        <fullName evidence="1">Biotin synthesis protein BioC 1</fullName>
    </alternativeName>
</protein>
<feature type="chain" id="PRO_0000412505" description="Malonyl-[acyl-carrier protein] O-methyltransferase 1">
    <location>
        <begin position="1"/>
        <end position="268"/>
    </location>
</feature>
<comment type="function">
    <text evidence="1">Converts the free carboxyl group of a malonyl-thioester to its methyl ester by transfer of a methyl group from S-adenosyl-L-methionine (SAM). It allows to synthesize pimeloyl-ACP via the fatty acid synthetic pathway.</text>
</comment>
<comment type="catalytic activity">
    <reaction evidence="1">
        <text>malonyl-[ACP] + S-adenosyl-L-methionine = malonyl-[ACP] methyl ester + S-adenosyl-L-homocysteine</text>
        <dbReference type="Rhea" id="RHEA:17105"/>
        <dbReference type="Rhea" id="RHEA-COMP:9623"/>
        <dbReference type="Rhea" id="RHEA-COMP:9954"/>
        <dbReference type="ChEBI" id="CHEBI:57856"/>
        <dbReference type="ChEBI" id="CHEBI:59789"/>
        <dbReference type="ChEBI" id="CHEBI:78449"/>
        <dbReference type="ChEBI" id="CHEBI:78845"/>
        <dbReference type="EC" id="2.1.1.197"/>
    </reaction>
</comment>
<comment type="pathway">
    <text evidence="1">Cofactor biosynthesis; biotin biosynthesis.</text>
</comment>
<comment type="similarity">
    <text evidence="1">Belongs to the methyltransferase superfamily.</text>
</comment>
<name>BIOC1_ILYPC</name>
<evidence type="ECO:0000255" key="1">
    <source>
        <dbReference type="HAMAP-Rule" id="MF_00835"/>
    </source>
</evidence>
<gene>
    <name evidence="1" type="primary">bioC1</name>
    <name type="ordered locus">Ilyop_0229</name>
</gene>
<accession>E3H9W1</accession>
<organism>
    <name type="scientific">Ilyobacter polytropus (strain ATCC 51220 / DSM 2926 / LMG 16218 / CuHBu1)</name>
    <dbReference type="NCBI Taxonomy" id="572544"/>
    <lineage>
        <taxon>Bacteria</taxon>
        <taxon>Fusobacteriati</taxon>
        <taxon>Fusobacteriota</taxon>
        <taxon>Fusobacteriia</taxon>
        <taxon>Fusobacteriales</taxon>
        <taxon>Fusobacteriaceae</taxon>
        <taxon>Ilyobacter</taxon>
    </lineage>
</organism>
<dbReference type="EC" id="2.1.1.197" evidence="1"/>
<dbReference type="EMBL" id="CP002281">
    <property type="protein sequence ID" value="ADO82018.1"/>
    <property type="molecule type" value="Genomic_DNA"/>
</dbReference>
<dbReference type="RefSeq" id="WP_013386689.1">
    <property type="nucleotide sequence ID" value="NC_014632.1"/>
</dbReference>
<dbReference type="SMR" id="E3H9W1"/>
<dbReference type="STRING" id="572544.Ilyop_0229"/>
<dbReference type="KEGG" id="ipo:Ilyop_0229"/>
<dbReference type="eggNOG" id="COG4106">
    <property type="taxonomic scope" value="Bacteria"/>
</dbReference>
<dbReference type="HOGENOM" id="CLU_046586_2_3_0"/>
<dbReference type="OrthoDB" id="9760689at2"/>
<dbReference type="UniPathway" id="UPA00078"/>
<dbReference type="Proteomes" id="UP000006875">
    <property type="component" value="Chromosome"/>
</dbReference>
<dbReference type="GO" id="GO:0010340">
    <property type="term" value="F:carboxyl-O-methyltransferase activity"/>
    <property type="evidence" value="ECO:0007669"/>
    <property type="project" value="UniProtKB-UniRule"/>
</dbReference>
<dbReference type="GO" id="GO:0102130">
    <property type="term" value="F:malonyl-CoA methyltransferase activity"/>
    <property type="evidence" value="ECO:0007669"/>
    <property type="project" value="UniProtKB-EC"/>
</dbReference>
<dbReference type="GO" id="GO:0009102">
    <property type="term" value="P:biotin biosynthetic process"/>
    <property type="evidence" value="ECO:0007669"/>
    <property type="project" value="UniProtKB-UniRule"/>
</dbReference>
<dbReference type="GO" id="GO:0032259">
    <property type="term" value="P:methylation"/>
    <property type="evidence" value="ECO:0007669"/>
    <property type="project" value="UniProtKB-KW"/>
</dbReference>
<dbReference type="CDD" id="cd02440">
    <property type="entry name" value="AdoMet_MTases"/>
    <property type="match status" value="1"/>
</dbReference>
<dbReference type="Gene3D" id="3.40.50.150">
    <property type="entry name" value="Vaccinia Virus protein VP39"/>
    <property type="match status" value="1"/>
</dbReference>
<dbReference type="HAMAP" id="MF_00835">
    <property type="entry name" value="BioC"/>
    <property type="match status" value="1"/>
</dbReference>
<dbReference type="InterPro" id="IPR011814">
    <property type="entry name" value="BioC"/>
</dbReference>
<dbReference type="InterPro" id="IPR041698">
    <property type="entry name" value="Methyltransf_25"/>
</dbReference>
<dbReference type="InterPro" id="IPR029063">
    <property type="entry name" value="SAM-dependent_MTases_sf"/>
</dbReference>
<dbReference type="NCBIfam" id="TIGR02072">
    <property type="entry name" value="BioC"/>
    <property type="match status" value="1"/>
</dbReference>
<dbReference type="PANTHER" id="PTHR43861:SF1">
    <property type="entry name" value="TRANS-ACONITATE 2-METHYLTRANSFERASE"/>
    <property type="match status" value="1"/>
</dbReference>
<dbReference type="PANTHER" id="PTHR43861">
    <property type="entry name" value="TRANS-ACONITATE 2-METHYLTRANSFERASE-RELATED"/>
    <property type="match status" value="1"/>
</dbReference>
<dbReference type="Pfam" id="PF13649">
    <property type="entry name" value="Methyltransf_25"/>
    <property type="match status" value="1"/>
</dbReference>
<dbReference type="SUPFAM" id="SSF53335">
    <property type="entry name" value="S-adenosyl-L-methionine-dependent methyltransferases"/>
    <property type="match status" value="1"/>
</dbReference>